<evidence type="ECO:0000255" key="1">
    <source>
        <dbReference type="PROSITE-ProRule" id="PRU00111"/>
    </source>
</evidence>
<dbReference type="EMBL" id="AL009126">
    <property type="protein sequence ID" value="CAB13260.1"/>
    <property type="molecule type" value="Genomic_DNA"/>
</dbReference>
<dbReference type="PIR" id="H69869">
    <property type="entry name" value="H69869"/>
</dbReference>
<dbReference type="RefSeq" id="NP_389270.1">
    <property type="nucleotide sequence ID" value="NC_000964.3"/>
</dbReference>
<dbReference type="RefSeq" id="WP_003244772.1">
    <property type="nucleotide sequence ID" value="NZ_OZ025638.1"/>
</dbReference>
<dbReference type="SMR" id="O31690"/>
<dbReference type="FunCoup" id="O31690">
    <property type="interactions" value="24"/>
</dbReference>
<dbReference type="STRING" id="224308.BSU13870"/>
<dbReference type="PaxDb" id="224308-BSU13870"/>
<dbReference type="EnsemblBacteria" id="CAB13260">
    <property type="protein sequence ID" value="CAB13260"/>
    <property type="gene ID" value="BSU_13870"/>
</dbReference>
<dbReference type="GeneID" id="936232"/>
<dbReference type="KEGG" id="bsu:BSU13870"/>
<dbReference type="PATRIC" id="fig|224308.179.peg.1513"/>
<dbReference type="eggNOG" id="COG1609">
    <property type="taxonomic scope" value="Bacteria"/>
</dbReference>
<dbReference type="InParanoid" id="O31690"/>
<dbReference type="OrthoDB" id="9798934at2"/>
<dbReference type="PhylomeDB" id="O31690"/>
<dbReference type="BioCyc" id="BSUB:BSU13870-MONOMER"/>
<dbReference type="Proteomes" id="UP000001570">
    <property type="component" value="Chromosome"/>
</dbReference>
<dbReference type="GO" id="GO:0003700">
    <property type="term" value="F:DNA-binding transcription factor activity"/>
    <property type="evidence" value="ECO:0000318"/>
    <property type="project" value="GO_Central"/>
</dbReference>
<dbReference type="GO" id="GO:0000976">
    <property type="term" value="F:transcription cis-regulatory region binding"/>
    <property type="evidence" value="ECO:0000318"/>
    <property type="project" value="GO_Central"/>
</dbReference>
<dbReference type="GO" id="GO:0006355">
    <property type="term" value="P:regulation of DNA-templated transcription"/>
    <property type="evidence" value="ECO:0000318"/>
    <property type="project" value="GO_Central"/>
</dbReference>
<dbReference type="CDD" id="cd01392">
    <property type="entry name" value="HTH_LacI"/>
    <property type="match status" value="1"/>
</dbReference>
<dbReference type="CDD" id="cd06286">
    <property type="entry name" value="PBP1_CcpB-like"/>
    <property type="match status" value="1"/>
</dbReference>
<dbReference type="Gene3D" id="3.40.50.2300">
    <property type="match status" value="2"/>
</dbReference>
<dbReference type="Gene3D" id="1.10.260.40">
    <property type="entry name" value="lambda repressor-like DNA-binding domains"/>
    <property type="match status" value="1"/>
</dbReference>
<dbReference type="InterPro" id="IPR000843">
    <property type="entry name" value="HTH_LacI"/>
</dbReference>
<dbReference type="InterPro" id="IPR010982">
    <property type="entry name" value="Lambda_DNA-bd_dom_sf"/>
</dbReference>
<dbReference type="InterPro" id="IPR001761">
    <property type="entry name" value="Peripla_BP/Lac1_sug-bd_dom"/>
</dbReference>
<dbReference type="InterPro" id="IPR028082">
    <property type="entry name" value="Peripla_BP_I"/>
</dbReference>
<dbReference type="PANTHER" id="PTHR30146:SF105">
    <property type="entry name" value="CATABOLITE CONTROL PROTEIN B"/>
    <property type="match status" value="1"/>
</dbReference>
<dbReference type="PANTHER" id="PTHR30146">
    <property type="entry name" value="LACI-RELATED TRANSCRIPTIONAL REPRESSOR"/>
    <property type="match status" value="1"/>
</dbReference>
<dbReference type="Pfam" id="PF00356">
    <property type="entry name" value="LacI"/>
    <property type="match status" value="1"/>
</dbReference>
<dbReference type="Pfam" id="PF00532">
    <property type="entry name" value="Peripla_BP_1"/>
    <property type="match status" value="1"/>
</dbReference>
<dbReference type="PRINTS" id="PR00036">
    <property type="entry name" value="HTHLACI"/>
</dbReference>
<dbReference type="SMART" id="SM00354">
    <property type="entry name" value="HTH_LACI"/>
    <property type="match status" value="1"/>
</dbReference>
<dbReference type="SUPFAM" id="SSF47413">
    <property type="entry name" value="lambda repressor-like DNA-binding domains"/>
    <property type="match status" value="1"/>
</dbReference>
<dbReference type="SUPFAM" id="SSF53822">
    <property type="entry name" value="Periplasmic binding protein-like I"/>
    <property type="match status" value="1"/>
</dbReference>
<dbReference type="PROSITE" id="PS00356">
    <property type="entry name" value="HTH_LACI_1"/>
    <property type="match status" value="1"/>
</dbReference>
<dbReference type="PROSITE" id="PS50932">
    <property type="entry name" value="HTH_LACI_2"/>
    <property type="match status" value="1"/>
</dbReference>
<accession>O31690</accession>
<gene>
    <name type="primary">ykvZ</name>
    <name type="ordered locus">BSU13870</name>
</gene>
<protein>
    <recommendedName>
        <fullName>Uncharacterized HTH-type transcriptional regulator YkvZ</fullName>
    </recommendedName>
</protein>
<proteinExistence type="predicted"/>
<organism>
    <name type="scientific">Bacillus subtilis (strain 168)</name>
    <dbReference type="NCBI Taxonomy" id="224308"/>
    <lineage>
        <taxon>Bacteria</taxon>
        <taxon>Bacillati</taxon>
        <taxon>Bacillota</taxon>
        <taxon>Bacilli</taxon>
        <taxon>Bacillales</taxon>
        <taxon>Bacillaceae</taxon>
        <taxon>Bacillus</taxon>
    </lineage>
</organism>
<reference key="1">
    <citation type="journal article" date="1997" name="Nature">
        <title>The complete genome sequence of the Gram-positive bacterium Bacillus subtilis.</title>
        <authorList>
            <person name="Kunst F."/>
            <person name="Ogasawara N."/>
            <person name="Moszer I."/>
            <person name="Albertini A.M."/>
            <person name="Alloni G."/>
            <person name="Azevedo V."/>
            <person name="Bertero M.G."/>
            <person name="Bessieres P."/>
            <person name="Bolotin A."/>
            <person name="Borchert S."/>
            <person name="Borriss R."/>
            <person name="Boursier L."/>
            <person name="Brans A."/>
            <person name="Braun M."/>
            <person name="Brignell S.C."/>
            <person name="Bron S."/>
            <person name="Brouillet S."/>
            <person name="Bruschi C.V."/>
            <person name="Caldwell B."/>
            <person name="Capuano V."/>
            <person name="Carter N.M."/>
            <person name="Choi S.-K."/>
            <person name="Codani J.-J."/>
            <person name="Connerton I.F."/>
            <person name="Cummings N.J."/>
            <person name="Daniel R.A."/>
            <person name="Denizot F."/>
            <person name="Devine K.M."/>
            <person name="Duesterhoeft A."/>
            <person name="Ehrlich S.D."/>
            <person name="Emmerson P.T."/>
            <person name="Entian K.-D."/>
            <person name="Errington J."/>
            <person name="Fabret C."/>
            <person name="Ferrari E."/>
            <person name="Foulger D."/>
            <person name="Fritz C."/>
            <person name="Fujita M."/>
            <person name="Fujita Y."/>
            <person name="Fuma S."/>
            <person name="Galizzi A."/>
            <person name="Galleron N."/>
            <person name="Ghim S.-Y."/>
            <person name="Glaser P."/>
            <person name="Goffeau A."/>
            <person name="Golightly E.J."/>
            <person name="Grandi G."/>
            <person name="Guiseppi G."/>
            <person name="Guy B.J."/>
            <person name="Haga K."/>
            <person name="Haiech J."/>
            <person name="Harwood C.R."/>
            <person name="Henaut A."/>
            <person name="Hilbert H."/>
            <person name="Holsappel S."/>
            <person name="Hosono S."/>
            <person name="Hullo M.-F."/>
            <person name="Itaya M."/>
            <person name="Jones L.-M."/>
            <person name="Joris B."/>
            <person name="Karamata D."/>
            <person name="Kasahara Y."/>
            <person name="Klaerr-Blanchard M."/>
            <person name="Klein C."/>
            <person name="Kobayashi Y."/>
            <person name="Koetter P."/>
            <person name="Koningstein G."/>
            <person name="Krogh S."/>
            <person name="Kumano M."/>
            <person name="Kurita K."/>
            <person name="Lapidus A."/>
            <person name="Lardinois S."/>
            <person name="Lauber J."/>
            <person name="Lazarevic V."/>
            <person name="Lee S.-M."/>
            <person name="Levine A."/>
            <person name="Liu H."/>
            <person name="Masuda S."/>
            <person name="Mauel C."/>
            <person name="Medigue C."/>
            <person name="Medina N."/>
            <person name="Mellado R.P."/>
            <person name="Mizuno M."/>
            <person name="Moestl D."/>
            <person name="Nakai S."/>
            <person name="Noback M."/>
            <person name="Noone D."/>
            <person name="O'Reilly M."/>
            <person name="Ogawa K."/>
            <person name="Ogiwara A."/>
            <person name="Oudega B."/>
            <person name="Park S.-H."/>
            <person name="Parro V."/>
            <person name="Pohl T.M."/>
            <person name="Portetelle D."/>
            <person name="Porwollik S."/>
            <person name="Prescott A.M."/>
            <person name="Presecan E."/>
            <person name="Pujic P."/>
            <person name="Purnelle B."/>
            <person name="Rapoport G."/>
            <person name="Rey M."/>
            <person name="Reynolds S."/>
            <person name="Rieger M."/>
            <person name="Rivolta C."/>
            <person name="Rocha E."/>
            <person name="Roche B."/>
            <person name="Rose M."/>
            <person name="Sadaie Y."/>
            <person name="Sato T."/>
            <person name="Scanlan E."/>
            <person name="Schleich S."/>
            <person name="Schroeter R."/>
            <person name="Scoffone F."/>
            <person name="Sekiguchi J."/>
            <person name="Sekowska A."/>
            <person name="Seror S.J."/>
            <person name="Serror P."/>
            <person name="Shin B.-S."/>
            <person name="Soldo B."/>
            <person name="Sorokin A."/>
            <person name="Tacconi E."/>
            <person name="Takagi T."/>
            <person name="Takahashi H."/>
            <person name="Takemaru K."/>
            <person name="Takeuchi M."/>
            <person name="Tamakoshi A."/>
            <person name="Tanaka T."/>
            <person name="Terpstra P."/>
            <person name="Tognoni A."/>
            <person name="Tosato V."/>
            <person name="Uchiyama S."/>
            <person name="Vandenbol M."/>
            <person name="Vannier F."/>
            <person name="Vassarotti A."/>
            <person name="Viari A."/>
            <person name="Wambutt R."/>
            <person name="Wedler E."/>
            <person name="Wedler H."/>
            <person name="Weitzenegger T."/>
            <person name="Winters P."/>
            <person name="Wipat A."/>
            <person name="Yamamoto H."/>
            <person name="Yamane K."/>
            <person name="Yasumoto K."/>
            <person name="Yata K."/>
            <person name="Yoshida K."/>
            <person name="Yoshikawa H.-F."/>
            <person name="Zumstein E."/>
            <person name="Yoshikawa H."/>
            <person name="Danchin A."/>
        </authorList>
    </citation>
    <scope>NUCLEOTIDE SEQUENCE [LARGE SCALE GENOMIC DNA]</scope>
    <source>
        <strain>168</strain>
    </source>
</reference>
<name>YKVZ_BACSU</name>
<sequence length="321" mass="36192">MANIKDIAEKAGVSVTTVSRVINNHPYVSEDKRKRVFEAMESLEYTRNIHAVHLSKGFSNMIGVVLPTVNLPYFAELIAGIADAAAESGVHLSLFQTNYEVQKEIFALSQLKQRQVDGLIFCSKALADEKLMEWEGPILLCQNSDNARFPTISIPHQEAFRNGLDYLIAKGHKKIAICLARKKGMNSHFRIKAYKEALEEIGEAFREDWVIEKAITINDGKALFHKWNTWKEKPTAIFVANDQVSAGLFLEAKNQRVSVPDELAILSVDNHEISQALGITTIDIQTREMGKQAFAILEKRIQGQPIERKVLDYRLIERSTV</sequence>
<keyword id="KW-0238">DNA-binding</keyword>
<keyword id="KW-1185">Reference proteome</keyword>
<keyword id="KW-0678">Repressor</keyword>
<keyword id="KW-0804">Transcription</keyword>
<keyword id="KW-0805">Transcription regulation</keyword>
<feature type="chain" id="PRO_0000108007" description="Uncharacterized HTH-type transcriptional regulator YkvZ">
    <location>
        <begin position="1"/>
        <end position="321"/>
    </location>
</feature>
<feature type="domain" description="HTH lacI-type" evidence="1">
    <location>
        <begin position="1"/>
        <end position="56"/>
    </location>
</feature>
<feature type="DNA-binding region" description="H-T-H motif" evidence="1">
    <location>
        <begin position="4"/>
        <end position="23"/>
    </location>
</feature>